<accession>Q6IRU5</accession>
<accession>Q8BR04</accession>
<accession>Q8CDX9</accession>
<accession>Q9CV35</accession>
<reference key="1">
    <citation type="journal article" date="2005" name="Science">
        <title>The transcriptional landscape of the mammalian genome.</title>
        <authorList>
            <person name="Carninci P."/>
            <person name="Kasukawa T."/>
            <person name="Katayama S."/>
            <person name="Gough J."/>
            <person name="Frith M.C."/>
            <person name="Maeda N."/>
            <person name="Oyama R."/>
            <person name="Ravasi T."/>
            <person name="Lenhard B."/>
            <person name="Wells C."/>
            <person name="Kodzius R."/>
            <person name="Shimokawa K."/>
            <person name="Bajic V.B."/>
            <person name="Brenner S.E."/>
            <person name="Batalov S."/>
            <person name="Forrest A.R."/>
            <person name="Zavolan M."/>
            <person name="Davis M.J."/>
            <person name="Wilming L.G."/>
            <person name="Aidinis V."/>
            <person name="Allen J.E."/>
            <person name="Ambesi-Impiombato A."/>
            <person name="Apweiler R."/>
            <person name="Aturaliya R.N."/>
            <person name="Bailey T.L."/>
            <person name="Bansal M."/>
            <person name="Baxter L."/>
            <person name="Beisel K.W."/>
            <person name="Bersano T."/>
            <person name="Bono H."/>
            <person name="Chalk A.M."/>
            <person name="Chiu K.P."/>
            <person name="Choudhary V."/>
            <person name="Christoffels A."/>
            <person name="Clutterbuck D.R."/>
            <person name="Crowe M.L."/>
            <person name="Dalla E."/>
            <person name="Dalrymple B.P."/>
            <person name="de Bono B."/>
            <person name="Della Gatta G."/>
            <person name="di Bernardo D."/>
            <person name="Down T."/>
            <person name="Engstrom P."/>
            <person name="Fagiolini M."/>
            <person name="Faulkner G."/>
            <person name="Fletcher C.F."/>
            <person name="Fukushima T."/>
            <person name="Furuno M."/>
            <person name="Futaki S."/>
            <person name="Gariboldi M."/>
            <person name="Georgii-Hemming P."/>
            <person name="Gingeras T.R."/>
            <person name="Gojobori T."/>
            <person name="Green R.E."/>
            <person name="Gustincich S."/>
            <person name="Harbers M."/>
            <person name="Hayashi Y."/>
            <person name="Hensch T.K."/>
            <person name="Hirokawa N."/>
            <person name="Hill D."/>
            <person name="Huminiecki L."/>
            <person name="Iacono M."/>
            <person name="Ikeo K."/>
            <person name="Iwama A."/>
            <person name="Ishikawa T."/>
            <person name="Jakt M."/>
            <person name="Kanapin A."/>
            <person name="Katoh M."/>
            <person name="Kawasawa Y."/>
            <person name="Kelso J."/>
            <person name="Kitamura H."/>
            <person name="Kitano H."/>
            <person name="Kollias G."/>
            <person name="Krishnan S.P."/>
            <person name="Kruger A."/>
            <person name="Kummerfeld S.K."/>
            <person name="Kurochkin I.V."/>
            <person name="Lareau L.F."/>
            <person name="Lazarevic D."/>
            <person name="Lipovich L."/>
            <person name="Liu J."/>
            <person name="Liuni S."/>
            <person name="McWilliam S."/>
            <person name="Madan Babu M."/>
            <person name="Madera M."/>
            <person name="Marchionni L."/>
            <person name="Matsuda H."/>
            <person name="Matsuzawa S."/>
            <person name="Miki H."/>
            <person name="Mignone F."/>
            <person name="Miyake S."/>
            <person name="Morris K."/>
            <person name="Mottagui-Tabar S."/>
            <person name="Mulder N."/>
            <person name="Nakano N."/>
            <person name="Nakauchi H."/>
            <person name="Ng P."/>
            <person name="Nilsson R."/>
            <person name="Nishiguchi S."/>
            <person name="Nishikawa S."/>
            <person name="Nori F."/>
            <person name="Ohara O."/>
            <person name="Okazaki Y."/>
            <person name="Orlando V."/>
            <person name="Pang K.C."/>
            <person name="Pavan W.J."/>
            <person name="Pavesi G."/>
            <person name="Pesole G."/>
            <person name="Petrovsky N."/>
            <person name="Piazza S."/>
            <person name="Reed J."/>
            <person name="Reid J.F."/>
            <person name="Ring B.Z."/>
            <person name="Ringwald M."/>
            <person name="Rost B."/>
            <person name="Ruan Y."/>
            <person name="Salzberg S.L."/>
            <person name="Sandelin A."/>
            <person name="Schneider C."/>
            <person name="Schoenbach C."/>
            <person name="Sekiguchi K."/>
            <person name="Semple C.A."/>
            <person name="Seno S."/>
            <person name="Sessa L."/>
            <person name="Sheng Y."/>
            <person name="Shibata Y."/>
            <person name="Shimada H."/>
            <person name="Shimada K."/>
            <person name="Silva D."/>
            <person name="Sinclair B."/>
            <person name="Sperling S."/>
            <person name="Stupka E."/>
            <person name="Sugiura K."/>
            <person name="Sultana R."/>
            <person name="Takenaka Y."/>
            <person name="Taki K."/>
            <person name="Tammoja K."/>
            <person name="Tan S.L."/>
            <person name="Tang S."/>
            <person name="Taylor M.S."/>
            <person name="Tegner J."/>
            <person name="Teichmann S.A."/>
            <person name="Ueda H.R."/>
            <person name="van Nimwegen E."/>
            <person name="Verardo R."/>
            <person name="Wei C.L."/>
            <person name="Yagi K."/>
            <person name="Yamanishi H."/>
            <person name="Zabarovsky E."/>
            <person name="Zhu S."/>
            <person name="Zimmer A."/>
            <person name="Hide W."/>
            <person name="Bult C."/>
            <person name="Grimmond S.M."/>
            <person name="Teasdale R.D."/>
            <person name="Liu E.T."/>
            <person name="Brusic V."/>
            <person name="Quackenbush J."/>
            <person name="Wahlestedt C."/>
            <person name="Mattick J.S."/>
            <person name="Hume D.A."/>
            <person name="Kai C."/>
            <person name="Sasaki D."/>
            <person name="Tomaru Y."/>
            <person name="Fukuda S."/>
            <person name="Kanamori-Katayama M."/>
            <person name="Suzuki M."/>
            <person name="Aoki J."/>
            <person name="Arakawa T."/>
            <person name="Iida J."/>
            <person name="Imamura K."/>
            <person name="Itoh M."/>
            <person name="Kato T."/>
            <person name="Kawaji H."/>
            <person name="Kawagashira N."/>
            <person name="Kawashima T."/>
            <person name="Kojima M."/>
            <person name="Kondo S."/>
            <person name="Konno H."/>
            <person name="Nakano K."/>
            <person name="Ninomiya N."/>
            <person name="Nishio T."/>
            <person name="Okada M."/>
            <person name="Plessy C."/>
            <person name="Shibata K."/>
            <person name="Shiraki T."/>
            <person name="Suzuki S."/>
            <person name="Tagami M."/>
            <person name="Waki K."/>
            <person name="Watahiki A."/>
            <person name="Okamura-Oho Y."/>
            <person name="Suzuki H."/>
            <person name="Kawai J."/>
            <person name="Hayashizaki Y."/>
        </authorList>
    </citation>
    <scope>NUCLEOTIDE SEQUENCE [LARGE SCALE MRNA] (ISOFORMS 2 AND 3)</scope>
    <source>
        <strain>C57BL/6J</strain>
        <tissue>Corpora quadrigemina</tissue>
        <tissue>Head</tissue>
        <tissue>Tongue</tissue>
    </source>
</reference>
<reference key="2">
    <citation type="journal article" date="2004" name="Genome Res.">
        <title>The status, quality, and expansion of the NIH full-length cDNA project: the Mammalian Gene Collection (MGC).</title>
        <authorList>
            <consortium name="The MGC Project Team"/>
        </authorList>
    </citation>
    <scope>NUCLEOTIDE SEQUENCE [LARGE SCALE MRNA] (ISOFORM 1)</scope>
    <source>
        <strain>C57BL/6J</strain>
        <tissue>Brain</tissue>
    </source>
</reference>
<reference key="3">
    <citation type="journal article" date="2010" name="Cell">
        <title>A tissue-specific atlas of mouse protein phosphorylation and expression.</title>
        <authorList>
            <person name="Huttlin E.L."/>
            <person name="Jedrychowski M.P."/>
            <person name="Elias J.E."/>
            <person name="Goswami T."/>
            <person name="Rad R."/>
            <person name="Beausoleil S.A."/>
            <person name="Villen J."/>
            <person name="Haas W."/>
            <person name="Sowa M.E."/>
            <person name="Gygi S.P."/>
        </authorList>
    </citation>
    <scope>IDENTIFICATION BY MASS SPECTROMETRY [LARGE SCALE ANALYSIS]</scope>
    <source>
        <tissue>Brain</tissue>
        <tissue>Heart</tissue>
        <tissue>Lung</tissue>
        <tissue>Pancreas</tissue>
    </source>
</reference>
<reference key="4">
    <citation type="journal article" date="2013" name="Mol. Cell">
        <title>SIRT5-mediated lysine desuccinylation impacts diverse metabolic pathways.</title>
        <authorList>
            <person name="Park J."/>
            <person name="Chen Y."/>
            <person name="Tishkoff D.X."/>
            <person name="Peng C."/>
            <person name="Tan M."/>
            <person name="Dai L."/>
            <person name="Xie Z."/>
            <person name="Zhang Y."/>
            <person name="Zwaans B.M."/>
            <person name="Skinner M.E."/>
            <person name="Lombard D.B."/>
            <person name="Zhao Y."/>
        </authorList>
    </citation>
    <scope>ACETYLATION [LARGE SCALE ANALYSIS] AT LYS-204</scope>
    <scope>IDENTIFICATION BY MASS SPECTROMETRY [LARGE SCALE ANALYSIS]</scope>
    <source>
        <tissue>Embryonic fibroblast</tissue>
    </source>
</reference>
<protein>
    <recommendedName>
        <fullName>Clathrin light chain B</fullName>
        <shortName>Lcb</shortName>
    </recommendedName>
</protein>
<name>CLCB_MOUSE</name>
<feature type="chain" id="PRO_0000205772" description="Clathrin light chain B">
    <location>
        <begin position="1"/>
        <end position="229"/>
    </location>
</feature>
<feature type="region of interest" description="Disordered" evidence="5">
    <location>
        <begin position="1"/>
        <end position="70"/>
    </location>
</feature>
<feature type="region of interest" description="Involved in binding clathrin heavy chain">
    <location>
        <begin position="93"/>
        <end position="155"/>
    </location>
</feature>
<feature type="compositionally biased region" description="Low complexity" evidence="5">
    <location>
        <begin position="1"/>
        <end position="17"/>
    </location>
</feature>
<feature type="compositionally biased region" description="Low complexity" evidence="5">
    <location>
        <begin position="45"/>
        <end position="58"/>
    </location>
</feature>
<feature type="modified residue" description="Phosphoserine" evidence="2">
    <location>
        <position position="11"/>
    </location>
</feature>
<feature type="modified residue" description="Phosphoserine" evidence="2">
    <location>
        <position position="13"/>
    </location>
</feature>
<feature type="modified residue" description="Phosphothreonine" evidence="4">
    <location>
        <position position="187"/>
    </location>
</feature>
<feature type="modified residue" description="N6-acetyllysine" evidence="8">
    <location>
        <position position="204"/>
    </location>
</feature>
<feature type="modified residue" description="Phosphoserine" evidence="3">
    <location>
        <position position="217"/>
    </location>
</feature>
<feature type="disulfide bond" evidence="1">
    <location>
        <begin position="199"/>
        <end position="209"/>
    </location>
</feature>
<feature type="splice variant" id="VSP_013383" description="In isoform 3." evidence="6">
    <location>
        <begin position="156"/>
        <end position="229"/>
    </location>
</feature>
<feature type="splice variant" id="VSP_013382" description="In isoform 2." evidence="6">
    <location>
        <begin position="156"/>
        <end position="173"/>
    </location>
</feature>
<organism>
    <name type="scientific">Mus musculus</name>
    <name type="common">Mouse</name>
    <dbReference type="NCBI Taxonomy" id="10090"/>
    <lineage>
        <taxon>Eukaryota</taxon>
        <taxon>Metazoa</taxon>
        <taxon>Chordata</taxon>
        <taxon>Craniata</taxon>
        <taxon>Vertebrata</taxon>
        <taxon>Euteleostomi</taxon>
        <taxon>Mammalia</taxon>
        <taxon>Eutheria</taxon>
        <taxon>Euarchontoglires</taxon>
        <taxon>Glires</taxon>
        <taxon>Rodentia</taxon>
        <taxon>Myomorpha</taxon>
        <taxon>Muroidea</taxon>
        <taxon>Muridae</taxon>
        <taxon>Murinae</taxon>
        <taxon>Mus</taxon>
        <taxon>Mus</taxon>
    </lineage>
</organism>
<dbReference type="EMBL" id="AK009844">
    <property type="protein sequence ID" value="BAB26539.1"/>
    <property type="molecule type" value="mRNA"/>
</dbReference>
<dbReference type="EMBL" id="AK029382">
    <property type="protein sequence ID" value="BAC26430.1"/>
    <property type="molecule type" value="mRNA"/>
</dbReference>
<dbReference type="EMBL" id="AK045989">
    <property type="protein sequence ID" value="BAC32563.1"/>
    <property type="molecule type" value="mRNA"/>
</dbReference>
<dbReference type="EMBL" id="BC070404">
    <property type="protein sequence ID" value="AAH70404.1"/>
    <property type="molecule type" value="mRNA"/>
</dbReference>
<dbReference type="CCDS" id="CCDS26533.1">
    <molecule id="Q6IRU5-2"/>
</dbReference>
<dbReference type="CCDS" id="CCDS84024.1">
    <molecule id="Q6IRU5-1"/>
</dbReference>
<dbReference type="RefSeq" id="NP_001334441.1">
    <molecule id="Q6IRU5-1"/>
    <property type="nucleotide sequence ID" value="NM_001347512.1"/>
</dbReference>
<dbReference type="RefSeq" id="NP_083146.1">
    <molecule id="Q6IRU5-2"/>
    <property type="nucleotide sequence ID" value="NM_028870.4"/>
</dbReference>
<dbReference type="SMR" id="Q6IRU5"/>
<dbReference type="BioGRID" id="216666">
    <property type="interactions" value="12"/>
</dbReference>
<dbReference type="FunCoup" id="Q6IRU5">
    <property type="interactions" value="2268"/>
</dbReference>
<dbReference type="IntAct" id="Q6IRU5">
    <property type="interactions" value="1"/>
</dbReference>
<dbReference type="STRING" id="10090.ENSMUSP00000053371"/>
<dbReference type="iPTMnet" id="Q6IRU5"/>
<dbReference type="PhosphoSitePlus" id="Q6IRU5"/>
<dbReference type="SwissPalm" id="Q6IRU5"/>
<dbReference type="REPRODUCTION-2DPAGE" id="Q6IRU5"/>
<dbReference type="jPOST" id="Q6IRU5"/>
<dbReference type="PaxDb" id="10090-ENSMUSP00000089198"/>
<dbReference type="PeptideAtlas" id="Q6IRU5"/>
<dbReference type="ProteomicsDB" id="285473">
    <molecule id="Q6IRU5-1"/>
</dbReference>
<dbReference type="ProteomicsDB" id="285474">
    <molecule id="Q6IRU5-2"/>
</dbReference>
<dbReference type="ProteomicsDB" id="285475">
    <molecule id="Q6IRU5-3"/>
</dbReference>
<dbReference type="Pumba" id="Q6IRU5"/>
<dbReference type="Antibodypedia" id="29088">
    <property type="antibodies" value="238 antibodies from 26 providers"/>
</dbReference>
<dbReference type="DNASU" id="74325"/>
<dbReference type="Ensembl" id="ENSMUST00000049575.8">
    <molecule id="Q6IRU5-1"/>
    <property type="protein sequence ID" value="ENSMUSP00000053371.8"/>
    <property type="gene ID" value="ENSMUSG00000047547.15"/>
</dbReference>
<dbReference type="Ensembl" id="ENSMUST00000091609.11">
    <molecule id="Q6IRU5-2"/>
    <property type="protein sequence ID" value="ENSMUSP00000089198.5"/>
    <property type="gene ID" value="ENSMUSG00000047547.15"/>
</dbReference>
<dbReference type="GeneID" id="74325"/>
<dbReference type="KEGG" id="mmu:74325"/>
<dbReference type="UCSC" id="uc007qon.1">
    <molecule id="Q6IRU5-1"/>
    <property type="organism name" value="mouse"/>
</dbReference>
<dbReference type="AGR" id="MGI:1921575"/>
<dbReference type="CTD" id="1212"/>
<dbReference type="MGI" id="MGI:1921575">
    <property type="gene designation" value="Cltb"/>
</dbReference>
<dbReference type="VEuPathDB" id="HostDB:ENSMUSG00000047547"/>
<dbReference type="eggNOG" id="KOG4031">
    <property type="taxonomic scope" value="Eukaryota"/>
</dbReference>
<dbReference type="GeneTree" id="ENSGT00940000160186"/>
<dbReference type="HOGENOM" id="CLU_091462_1_0_1"/>
<dbReference type="InParanoid" id="Q6IRU5"/>
<dbReference type="OMA" id="KEWVCER"/>
<dbReference type="OrthoDB" id="5512at2759"/>
<dbReference type="PhylomeDB" id="Q6IRU5"/>
<dbReference type="TreeFam" id="TF313162"/>
<dbReference type="Reactome" id="R-MMU-190873">
    <property type="pathway name" value="Gap junction degradation"/>
</dbReference>
<dbReference type="Reactome" id="R-MMU-196025">
    <property type="pathway name" value="Formation of annular gap junctions"/>
</dbReference>
<dbReference type="Reactome" id="R-MMU-432720">
    <property type="pathway name" value="Lysosome Vesicle Biogenesis"/>
</dbReference>
<dbReference type="Reactome" id="R-MMU-5099900">
    <property type="pathway name" value="WNT5A-dependent internalization of FZD4"/>
</dbReference>
<dbReference type="Reactome" id="R-MMU-5140745">
    <property type="pathway name" value="WNT5A-dependent internalization of FZD2, FZD5 and ROR2"/>
</dbReference>
<dbReference type="Reactome" id="R-MMU-8856825">
    <property type="pathway name" value="Cargo recognition for clathrin-mediated endocytosis"/>
</dbReference>
<dbReference type="Reactome" id="R-MMU-8856828">
    <property type="pathway name" value="Clathrin-mediated endocytosis"/>
</dbReference>
<dbReference type="BioGRID-ORCS" id="74325">
    <property type="hits" value="0 hits in 80 CRISPR screens"/>
</dbReference>
<dbReference type="CD-CODE" id="CE726F99">
    <property type="entry name" value="Postsynaptic density"/>
</dbReference>
<dbReference type="ChiTaRS" id="Cltb">
    <property type="organism name" value="mouse"/>
</dbReference>
<dbReference type="PRO" id="PR:Q6IRU5"/>
<dbReference type="Proteomes" id="UP000000589">
    <property type="component" value="Chromosome 13"/>
</dbReference>
<dbReference type="RNAct" id="Q6IRU5">
    <property type="molecule type" value="protein"/>
</dbReference>
<dbReference type="Bgee" id="ENSMUSG00000047547">
    <property type="expression patterns" value="Expressed in embryonic brain and 248 other cell types or tissues"/>
</dbReference>
<dbReference type="ExpressionAtlas" id="Q6IRU5">
    <property type="expression patterns" value="baseline and differential"/>
</dbReference>
<dbReference type="GO" id="GO:0060170">
    <property type="term" value="C:ciliary membrane"/>
    <property type="evidence" value="ECO:0000314"/>
    <property type="project" value="MGI"/>
</dbReference>
<dbReference type="GO" id="GO:0030118">
    <property type="term" value="C:clathrin coat"/>
    <property type="evidence" value="ECO:0000250"/>
    <property type="project" value="UniProtKB"/>
</dbReference>
<dbReference type="GO" id="GO:0030132">
    <property type="term" value="C:clathrin coat of coated pit"/>
    <property type="evidence" value="ECO:0007669"/>
    <property type="project" value="InterPro"/>
</dbReference>
<dbReference type="GO" id="GO:0030130">
    <property type="term" value="C:clathrin coat of trans-Golgi network vesicle"/>
    <property type="evidence" value="ECO:0007669"/>
    <property type="project" value="InterPro"/>
</dbReference>
<dbReference type="GO" id="GO:0005829">
    <property type="term" value="C:cytosol"/>
    <property type="evidence" value="ECO:0007669"/>
    <property type="project" value="Ensembl"/>
</dbReference>
<dbReference type="GO" id="GO:0005886">
    <property type="term" value="C:plasma membrane"/>
    <property type="evidence" value="ECO:0000314"/>
    <property type="project" value="MGI"/>
</dbReference>
<dbReference type="GO" id="GO:0098835">
    <property type="term" value="C:presynaptic endocytic zone membrane"/>
    <property type="evidence" value="ECO:0007669"/>
    <property type="project" value="Ensembl"/>
</dbReference>
<dbReference type="GO" id="GO:0030672">
    <property type="term" value="C:synaptic vesicle membrane"/>
    <property type="evidence" value="ECO:0007669"/>
    <property type="project" value="Ensembl"/>
</dbReference>
<dbReference type="GO" id="GO:0005802">
    <property type="term" value="C:trans-Golgi network"/>
    <property type="evidence" value="ECO:0000314"/>
    <property type="project" value="MGI"/>
</dbReference>
<dbReference type="GO" id="GO:0042277">
    <property type="term" value="F:peptide binding"/>
    <property type="evidence" value="ECO:0007669"/>
    <property type="project" value="Ensembl"/>
</dbReference>
<dbReference type="GO" id="GO:0005198">
    <property type="term" value="F:structural molecule activity"/>
    <property type="evidence" value="ECO:0007669"/>
    <property type="project" value="InterPro"/>
</dbReference>
<dbReference type="GO" id="GO:0006886">
    <property type="term" value="P:intracellular protein transport"/>
    <property type="evidence" value="ECO:0007669"/>
    <property type="project" value="InterPro"/>
</dbReference>
<dbReference type="GO" id="GO:0048488">
    <property type="term" value="P:synaptic vesicle endocytosis"/>
    <property type="evidence" value="ECO:0007669"/>
    <property type="project" value="Ensembl"/>
</dbReference>
<dbReference type="InterPro" id="IPR000996">
    <property type="entry name" value="Clathrin_L-chain"/>
</dbReference>
<dbReference type="PANTHER" id="PTHR10639">
    <property type="entry name" value="CLATHRIN LIGHT CHAIN"/>
    <property type="match status" value="1"/>
</dbReference>
<dbReference type="PANTHER" id="PTHR10639:SF28">
    <property type="entry name" value="CLATHRIN LIGHT CHAIN B"/>
    <property type="match status" value="1"/>
</dbReference>
<dbReference type="Pfam" id="PF01086">
    <property type="entry name" value="Clathrin_lg_ch"/>
    <property type="match status" value="1"/>
</dbReference>
<dbReference type="PROSITE" id="PS00224">
    <property type="entry name" value="CLATHRIN_LIGHT_CHN_1"/>
    <property type="match status" value="1"/>
</dbReference>
<dbReference type="PROSITE" id="PS00581">
    <property type="entry name" value="CLATHRIN_LIGHT_CHN_2"/>
    <property type="match status" value="1"/>
</dbReference>
<evidence type="ECO:0000250" key="1"/>
<evidence type="ECO:0000250" key="2">
    <source>
        <dbReference type="UniProtKB" id="P04975"/>
    </source>
</evidence>
<evidence type="ECO:0000250" key="3">
    <source>
        <dbReference type="UniProtKB" id="P09496"/>
    </source>
</evidence>
<evidence type="ECO:0000250" key="4">
    <source>
        <dbReference type="UniProtKB" id="P09497"/>
    </source>
</evidence>
<evidence type="ECO:0000256" key="5">
    <source>
        <dbReference type="SAM" id="MobiDB-lite"/>
    </source>
</evidence>
<evidence type="ECO:0000303" key="6">
    <source>
    </source>
</evidence>
<evidence type="ECO:0000305" key="7"/>
<evidence type="ECO:0007744" key="8">
    <source>
    </source>
</evidence>
<gene>
    <name type="primary">Cltb</name>
</gene>
<keyword id="KW-0007">Acetylation</keyword>
<keyword id="KW-0025">Alternative splicing</keyword>
<keyword id="KW-0106">Calcium</keyword>
<keyword id="KW-0168">Coated pit</keyword>
<keyword id="KW-0968">Cytoplasmic vesicle</keyword>
<keyword id="KW-1015">Disulfide bond</keyword>
<keyword id="KW-0472">Membrane</keyword>
<keyword id="KW-0597">Phosphoprotein</keyword>
<keyword id="KW-1185">Reference proteome</keyword>
<comment type="function">
    <text>Clathrin is the major protein of the polyhedral coat of coated pits and vesicles.</text>
</comment>
<comment type="subunit">
    <text>Clathrin coats are formed from molecules containing 3 heavy chains and 3 light chains. Interacts (via N-terminus) with HIP1. Interacts with HIP1R.</text>
</comment>
<comment type="subcellular location">
    <subcellularLocation>
        <location>Cytoplasmic vesicle membrane</location>
        <topology>Peripheral membrane protein</topology>
        <orientation>Cytoplasmic side</orientation>
    </subcellularLocation>
    <subcellularLocation>
        <location>Membrane</location>
        <location>Coated pit</location>
        <topology>Peripheral membrane protein</topology>
        <orientation>Cytoplasmic side</orientation>
    </subcellularLocation>
    <text>Cytoplasmic face of coated pits and vesicles.</text>
</comment>
<comment type="alternative products">
    <event type="alternative splicing"/>
    <isoform>
        <id>Q6IRU5-1</id>
        <name>1</name>
        <sequence type="displayed"/>
    </isoform>
    <isoform>
        <id>Q6IRU5-2</id>
        <name>2</name>
        <sequence type="described" ref="VSP_013382"/>
    </isoform>
    <isoform>
        <id>Q6IRU5-3</id>
        <name>3</name>
        <sequence type="described" ref="VSP_013383"/>
    </isoform>
</comment>
<comment type="similarity">
    <text evidence="7">Belongs to the clathrin light chain family.</text>
</comment>
<proteinExistence type="evidence at protein level"/>
<sequence length="229" mass="25172">MAEDFGFFSSSESGAPEAAEEDPAAAFLAQQESEIAGIENDPGFGAPAASQVASAQPGLASGAGSEDMSTTVNGDVFQEANGPADGYAAIAQADRLTQEPESIRKWREEQKKRLQELDAASKVTEQEWREKAKKDLEEWNQRQSEQVEKNKINNRIADKAFYQQPDADTIGYVASEEAFVKESKEETPGTEWEKVAQLCDFNPKSSKQCKDVSRLRSVLMSLKQTPLSR</sequence>